<reference key="1">
    <citation type="journal article" date="2000" name="Nature">
        <title>The genome sequence of the food-borne pathogen Campylobacter jejuni reveals hypervariable sequences.</title>
        <authorList>
            <person name="Parkhill J."/>
            <person name="Wren B.W."/>
            <person name="Mungall K.L."/>
            <person name="Ketley J.M."/>
            <person name="Churcher C.M."/>
            <person name="Basham D."/>
            <person name="Chillingworth T."/>
            <person name="Davies R.M."/>
            <person name="Feltwell T."/>
            <person name="Holroyd S."/>
            <person name="Jagels K."/>
            <person name="Karlyshev A.V."/>
            <person name="Moule S."/>
            <person name="Pallen M.J."/>
            <person name="Penn C.W."/>
            <person name="Quail M.A."/>
            <person name="Rajandream M.A."/>
            <person name="Rutherford K.M."/>
            <person name="van Vliet A.H.M."/>
            <person name="Whitehead S."/>
            <person name="Barrell B.G."/>
        </authorList>
    </citation>
    <scope>NUCLEOTIDE SEQUENCE [LARGE SCALE GENOMIC DNA]</scope>
    <source>
        <strain>ATCC 700819 / NCTC 11168</strain>
    </source>
</reference>
<name>FABZ_CAMJE</name>
<dbReference type="EC" id="4.2.1.59" evidence="1"/>
<dbReference type="EMBL" id="AL111168">
    <property type="protein sequence ID" value="CAL34427.1"/>
    <property type="molecule type" value="Genomic_DNA"/>
</dbReference>
<dbReference type="PIR" id="H81445">
    <property type="entry name" value="H81445"/>
</dbReference>
<dbReference type="RefSeq" id="WP_002857452.1">
    <property type="nucleotide sequence ID" value="NZ_SZUC01000004.1"/>
</dbReference>
<dbReference type="RefSeq" id="YP_002343715.1">
    <property type="nucleotide sequence ID" value="NC_002163.1"/>
</dbReference>
<dbReference type="SMR" id="Q9PIM2"/>
<dbReference type="IntAct" id="Q9PIM2">
    <property type="interactions" value="7"/>
</dbReference>
<dbReference type="STRING" id="192222.Cj0273"/>
<dbReference type="PaxDb" id="192222-Cj0273"/>
<dbReference type="EnsemblBacteria" id="CAL34427">
    <property type="protein sequence ID" value="CAL34427"/>
    <property type="gene ID" value="Cj0273"/>
</dbReference>
<dbReference type="GeneID" id="904598"/>
<dbReference type="KEGG" id="cje:Cj0273"/>
<dbReference type="PATRIC" id="fig|192222.6.peg.267"/>
<dbReference type="eggNOG" id="COG0764">
    <property type="taxonomic scope" value="Bacteria"/>
</dbReference>
<dbReference type="HOGENOM" id="CLU_078912_1_2_7"/>
<dbReference type="OrthoDB" id="9772788at2"/>
<dbReference type="Proteomes" id="UP000000799">
    <property type="component" value="Chromosome"/>
</dbReference>
<dbReference type="GO" id="GO:0005737">
    <property type="term" value="C:cytoplasm"/>
    <property type="evidence" value="ECO:0007669"/>
    <property type="project" value="UniProtKB-SubCell"/>
</dbReference>
<dbReference type="GO" id="GO:0016020">
    <property type="term" value="C:membrane"/>
    <property type="evidence" value="ECO:0007669"/>
    <property type="project" value="GOC"/>
</dbReference>
<dbReference type="GO" id="GO:0019171">
    <property type="term" value="F:(3R)-hydroxyacyl-[acyl-carrier-protein] dehydratase activity"/>
    <property type="evidence" value="ECO:0000314"/>
    <property type="project" value="CACAO"/>
</dbReference>
<dbReference type="GO" id="GO:0006633">
    <property type="term" value="P:fatty acid biosynthetic process"/>
    <property type="evidence" value="ECO:0007669"/>
    <property type="project" value="UniProtKB-UniRule"/>
</dbReference>
<dbReference type="GO" id="GO:0009245">
    <property type="term" value="P:lipid A biosynthetic process"/>
    <property type="evidence" value="ECO:0007669"/>
    <property type="project" value="UniProtKB-UniRule"/>
</dbReference>
<dbReference type="CDD" id="cd01288">
    <property type="entry name" value="FabZ"/>
    <property type="match status" value="1"/>
</dbReference>
<dbReference type="FunFam" id="3.10.129.10:FF:000076">
    <property type="entry name" value="3-hydroxyacyl-[acyl-carrier-protein] dehydratase FabZ"/>
    <property type="match status" value="1"/>
</dbReference>
<dbReference type="Gene3D" id="3.10.129.10">
    <property type="entry name" value="Hotdog Thioesterase"/>
    <property type="match status" value="1"/>
</dbReference>
<dbReference type="HAMAP" id="MF_00406">
    <property type="entry name" value="FabZ"/>
    <property type="match status" value="1"/>
</dbReference>
<dbReference type="InterPro" id="IPR013114">
    <property type="entry name" value="FabA_FabZ"/>
</dbReference>
<dbReference type="InterPro" id="IPR010084">
    <property type="entry name" value="FabZ"/>
</dbReference>
<dbReference type="InterPro" id="IPR029069">
    <property type="entry name" value="HotDog_dom_sf"/>
</dbReference>
<dbReference type="NCBIfam" id="TIGR01750">
    <property type="entry name" value="fabZ"/>
    <property type="match status" value="1"/>
</dbReference>
<dbReference type="NCBIfam" id="NF000582">
    <property type="entry name" value="PRK00006.1"/>
    <property type="match status" value="1"/>
</dbReference>
<dbReference type="PANTHER" id="PTHR30272">
    <property type="entry name" value="3-HYDROXYACYL-[ACYL-CARRIER-PROTEIN] DEHYDRATASE"/>
    <property type="match status" value="1"/>
</dbReference>
<dbReference type="PANTHER" id="PTHR30272:SF1">
    <property type="entry name" value="3-HYDROXYACYL-[ACYL-CARRIER-PROTEIN] DEHYDRATASE"/>
    <property type="match status" value="1"/>
</dbReference>
<dbReference type="Pfam" id="PF07977">
    <property type="entry name" value="FabA"/>
    <property type="match status" value="1"/>
</dbReference>
<dbReference type="SUPFAM" id="SSF54637">
    <property type="entry name" value="Thioesterase/thiol ester dehydrase-isomerase"/>
    <property type="match status" value="1"/>
</dbReference>
<protein>
    <recommendedName>
        <fullName evidence="1">3-hydroxyacyl-[acyl-carrier-protein] dehydratase FabZ</fullName>
        <ecNumber evidence="1">4.2.1.59</ecNumber>
    </recommendedName>
    <alternativeName>
        <fullName evidence="1">(3R)-hydroxymyristoyl-[acyl-carrier-protein] dehydratase</fullName>
        <shortName evidence="1">(3R)-hydroxymyristoyl-ACP dehydrase</shortName>
    </alternativeName>
    <alternativeName>
        <fullName evidence="1">Beta-hydroxyacyl-ACP dehydratase</fullName>
    </alternativeName>
</protein>
<gene>
    <name evidence="1" type="primary">fabZ</name>
    <name type="ordered locus">Cj0273</name>
</gene>
<feature type="chain" id="PRO_0000091657" description="3-hydroxyacyl-[acyl-carrier-protein] dehydratase FabZ">
    <location>
        <begin position="1"/>
        <end position="146"/>
    </location>
</feature>
<feature type="active site" evidence="1">
    <location>
        <position position="48"/>
    </location>
</feature>
<comment type="function">
    <text evidence="1">Involved in unsaturated fatty acids biosynthesis. Catalyzes the dehydration of short chain beta-hydroxyacyl-ACPs and long chain saturated and unsaturated beta-hydroxyacyl-ACPs.</text>
</comment>
<comment type="catalytic activity">
    <reaction evidence="1">
        <text>a (3R)-hydroxyacyl-[ACP] = a (2E)-enoyl-[ACP] + H2O</text>
        <dbReference type="Rhea" id="RHEA:13097"/>
        <dbReference type="Rhea" id="RHEA-COMP:9925"/>
        <dbReference type="Rhea" id="RHEA-COMP:9945"/>
        <dbReference type="ChEBI" id="CHEBI:15377"/>
        <dbReference type="ChEBI" id="CHEBI:78784"/>
        <dbReference type="ChEBI" id="CHEBI:78827"/>
        <dbReference type="EC" id="4.2.1.59"/>
    </reaction>
</comment>
<comment type="subcellular location">
    <subcellularLocation>
        <location evidence="1">Cytoplasm</location>
    </subcellularLocation>
</comment>
<comment type="similarity">
    <text evidence="1">Belongs to the thioester dehydratase family. FabZ subfamily.</text>
</comment>
<proteinExistence type="inferred from homology"/>
<organism>
    <name type="scientific">Campylobacter jejuni subsp. jejuni serotype O:2 (strain ATCC 700819 / NCTC 11168)</name>
    <dbReference type="NCBI Taxonomy" id="192222"/>
    <lineage>
        <taxon>Bacteria</taxon>
        <taxon>Pseudomonadati</taxon>
        <taxon>Campylobacterota</taxon>
        <taxon>Epsilonproteobacteria</taxon>
        <taxon>Campylobacterales</taxon>
        <taxon>Campylobacteraceae</taxon>
        <taxon>Campylobacter</taxon>
    </lineage>
</organism>
<keyword id="KW-0963">Cytoplasm</keyword>
<keyword id="KW-0441">Lipid A biosynthesis</keyword>
<keyword id="KW-0444">Lipid biosynthesis</keyword>
<keyword id="KW-0443">Lipid metabolism</keyword>
<keyword id="KW-0456">Lyase</keyword>
<keyword id="KW-1185">Reference proteome</keyword>
<evidence type="ECO:0000255" key="1">
    <source>
        <dbReference type="HAMAP-Rule" id="MF_00406"/>
    </source>
</evidence>
<sequence>MIDVMQIQEILPHRYPFLLVDKITELKVKEVVLGYKNISISDHVFMGHFPGHPIYPGVLILEGMAQTGGVLAFESMEDKVDPKSKVVYFTGIDGAKFRNPVRPGDRLDYEMSVVKNRGNMWIFKGQAFVDGNLVAEAELKAMIVDK</sequence>
<accession>Q9PIM2</accession>
<accession>Q0PBN2</accession>